<protein>
    <recommendedName>
        <fullName evidence="1">Bifunctional protein GlmU</fullName>
    </recommendedName>
    <domain>
        <recommendedName>
            <fullName evidence="1">UDP-N-acetylglucosamine pyrophosphorylase</fullName>
            <ecNumber evidence="1">2.7.7.23</ecNumber>
        </recommendedName>
        <alternativeName>
            <fullName evidence="1">N-acetylglucosamine-1-phosphate uridyltransferase</fullName>
        </alternativeName>
    </domain>
    <domain>
        <recommendedName>
            <fullName evidence="1">Glucosamine-1-phosphate N-acetyltransferase</fullName>
            <ecNumber evidence="1">2.3.1.157</ecNumber>
        </recommendedName>
    </domain>
</protein>
<gene>
    <name evidence="1" type="primary">glmU</name>
    <name type="ordered locus">BMASAVP1_A3051</name>
</gene>
<reference key="1">
    <citation type="journal article" date="2010" name="Genome Biol. Evol.">
        <title>Continuing evolution of Burkholderia mallei through genome reduction and large-scale rearrangements.</title>
        <authorList>
            <person name="Losada L."/>
            <person name="Ronning C.M."/>
            <person name="DeShazer D."/>
            <person name="Woods D."/>
            <person name="Fedorova N."/>
            <person name="Kim H.S."/>
            <person name="Shabalina S.A."/>
            <person name="Pearson T.R."/>
            <person name="Brinkac L."/>
            <person name="Tan P."/>
            <person name="Nandi T."/>
            <person name="Crabtree J."/>
            <person name="Badger J."/>
            <person name="Beckstrom-Sternberg S."/>
            <person name="Saqib M."/>
            <person name="Schutzer S.E."/>
            <person name="Keim P."/>
            <person name="Nierman W.C."/>
        </authorList>
    </citation>
    <scope>NUCLEOTIDE SEQUENCE [LARGE SCALE GENOMIC DNA]</scope>
    <source>
        <strain>SAVP1</strain>
    </source>
</reference>
<keyword id="KW-0012">Acyltransferase</keyword>
<keyword id="KW-0133">Cell shape</keyword>
<keyword id="KW-0961">Cell wall biogenesis/degradation</keyword>
<keyword id="KW-0963">Cytoplasm</keyword>
<keyword id="KW-0460">Magnesium</keyword>
<keyword id="KW-0479">Metal-binding</keyword>
<keyword id="KW-0511">Multifunctional enzyme</keyword>
<keyword id="KW-0548">Nucleotidyltransferase</keyword>
<keyword id="KW-0573">Peptidoglycan synthesis</keyword>
<keyword id="KW-0677">Repeat</keyword>
<keyword id="KW-0808">Transferase</keyword>
<comment type="function">
    <text evidence="1">Catalyzes the last two sequential reactions in the de novo biosynthetic pathway for UDP-N-acetylglucosamine (UDP-GlcNAc). The C-terminal domain catalyzes the transfer of acetyl group from acetyl coenzyme A to glucosamine-1-phosphate (GlcN-1-P) to produce N-acetylglucosamine-1-phosphate (GlcNAc-1-P), which is converted into UDP-GlcNAc by the transfer of uridine 5-monophosphate (from uridine 5-triphosphate), a reaction catalyzed by the N-terminal domain.</text>
</comment>
<comment type="catalytic activity">
    <reaction evidence="1">
        <text>alpha-D-glucosamine 1-phosphate + acetyl-CoA = N-acetyl-alpha-D-glucosamine 1-phosphate + CoA + H(+)</text>
        <dbReference type="Rhea" id="RHEA:13725"/>
        <dbReference type="ChEBI" id="CHEBI:15378"/>
        <dbReference type="ChEBI" id="CHEBI:57287"/>
        <dbReference type="ChEBI" id="CHEBI:57288"/>
        <dbReference type="ChEBI" id="CHEBI:57776"/>
        <dbReference type="ChEBI" id="CHEBI:58516"/>
        <dbReference type="EC" id="2.3.1.157"/>
    </reaction>
</comment>
<comment type="catalytic activity">
    <reaction evidence="1">
        <text>N-acetyl-alpha-D-glucosamine 1-phosphate + UTP + H(+) = UDP-N-acetyl-alpha-D-glucosamine + diphosphate</text>
        <dbReference type="Rhea" id="RHEA:13509"/>
        <dbReference type="ChEBI" id="CHEBI:15378"/>
        <dbReference type="ChEBI" id="CHEBI:33019"/>
        <dbReference type="ChEBI" id="CHEBI:46398"/>
        <dbReference type="ChEBI" id="CHEBI:57705"/>
        <dbReference type="ChEBI" id="CHEBI:57776"/>
        <dbReference type="EC" id="2.7.7.23"/>
    </reaction>
</comment>
<comment type="cofactor">
    <cofactor evidence="1">
        <name>Mg(2+)</name>
        <dbReference type="ChEBI" id="CHEBI:18420"/>
    </cofactor>
    <text evidence="1">Binds 1 Mg(2+) ion per subunit.</text>
</comment>
<comment type="pathway">
    <text evidence="1">Nucleotide-sugar biosynthesis; UDP-N-acetyl-alpha-D-glucosamine biosynthesis; N-acetyl-alpha-D-glucosamine 1-phosphate from alpha-D-glucosamine 6-phosphate (route II): step 2/2.</text>
</comment>
<comment type="pathway">
    <text evidence="1">Nucleotide-sugar biosynthesis; UDP-N-acetyl-alpha-D-glucosamine biosynthesis; UDP-N-acetyl-alpha-D-glucosamine from N-acetyl-alpha-D-glucosamine 1-phosphate: step 1/1.</text>
</comment>
<comment type="pathway">
    <text evidence="1">Bacterial outer membrane biogenesis; LPS lipid A biosynthesis.</text>
</comment>
<comment type="subunit">
    <text evidence="1">Homotrimer.</text>
</comment>
<comment type="subcellular location">
    <subcellularLocation>
        <location evidence="1">Cytoplasm</location>
    </subcellularLocation>
</comment>
<comment type="similarity">
    <text evidence="1">In the N-terminal section; belongs to the N-acetylglucosamine-1-phosphate uridyltransferase family.</text>
</comment>
<comment type="similarity">
    <text evidence="1">In the C-terminal section; belongs to the transferase hexapeptide repeat family.</text>
</comment>
<organism>
    <name type="scientific">Burkholderia mallei (strain SAVP1)</name>
    <dbReference type="NCBI Taxonomy" id="320388"/>
    <lineage>
        <taxon>Bacteria</taxon>
        <taxon>Pseudomonadati</taxon>
        <taxon>Pseudomonadota</taxon>
        <taxon>Betaproteobacteria</taxon>
        <taxon>Burkholderiales</taxon>
        <taxon>Burkholderiaceae</taxon>
        <taxon>Burkholderia</taxon>
        <taxon>pseudomallei group</taxon>
    </lineage>
</organism>
<name>GLMU_BURMS</name>
<dbReference type="EC" id="2.7.7.23" evidence="1"/>
<dbReference type="EC" id="2.3.1.157" evidence="1"/>
<dbReference type="EMBL" id="CP000526">
    <property type="protein sequence ID" value="ABM52634.1"/>
    <property type="molecule type" value="Genomic_DNA"/>
</dbReference>
<dbReference type="RefSeq" id="WP_004190034.1">
    <property type="nucleotide sequence ID" value="NC_008785.1"/>
</dbReference>
<dbReference type="SMR" id="A1V7Z3"/>
<dbReference type="GeneID" id="92981044"/>
<dbReference type="KEGG" id="bmv:BMASAVP1_A3051"/>
<dbReference type="HOGENOM" id="CLU_029499_15_2_4"/>
<dbReference type="UniPathway" id="UPA00113">
    <property type="reaction ID" value="UER00532"/>
</dbReference>
<dbReference type="UniPathway" id="UPA00113">
    <property type="reaction ID" value="UER00533"/>
</dbReference>
<dbReference type="UniPathway" id="UPA00973"/>
<dbReference type="GO" id="GO:0005737">
    <property type="term" value="C:cytoplasm"/>
    <property type="evidence" value="ECO:0007669"/>
    <property type="project" value="UniProtKB-SubCell"/>
</dbReference>
<dbReference type="GO" id="GO:0016020">
    <property type="term" value="C:membrane"/>
    <property type="evidence" value="ECO:0007669"/>
    <property type="project" value="GOC"/>
</dbReference>
<dbReference type="GO" id="GO:0019134">
    <property type="term" value="F:glucosamine-1-phosphate N-acetyltransferase activity"/>
    <property type="evidence" value="ECO:0007669"/>
    <property type="project" value="UniProtKB-UniRule"/>
</dbReference>
<dbReference type="GO" id="GO:0000287">
    <property type="term" value="F:magnesium ion binding"/>
    <property type="evidence" value="ECO:0007669"/>
    <property type="project" value="UniProtKB-UniRule"/>
</dbReference>
<dbReference type="GO" id="GO:0003977">
    <property type="term" value="F:UDP-N-acetylglucosamine diphosphorylase activity"/>
    <property type="evidence" value="ECO:0007669"/>
    <property type="project" value="UniProtKB-UniRule"/>
</dbReference>
<dbReference type="GO" id="GO:0000902">
    <property type="term" value="P:cell morphogenesis"/>
    <property type="evidence" value="ECO:0007669"/>
    <property type="project" value="UniProtKB-UniRule"/>
</dbReference>
<dbReference type="GO" id="GO:0071555">
    <property type="term" value="P:cell wall organization"/>
    <property type="evidence" value="ECO:0007669"/>
    <property type="project" value="UniProtKB-KW"/>
</dbReference>
<dbReference type="GO" id="GO:0009245">
    <property type="term" value="P:lipid A biosynthetic process"/>
    <property type="evidence" value="ECO:0007669"/>
    <property type="project" value="UniProtKB-UniRule"/>
</dbReference>
<dbReference type="GO" id="GO:0009252">
    <property type="term" value="P:peptidoglycan biosynthetic process"/>
    <property type="evidence" value="ECO:0007669"/>
    <property type="project" value="UniProtKB-UniRule"/>
</dbReference>
<dbReference type="GO" id="GO:0008360">
    <property type="term" value="P:regulation of cell shape"/>
    <property type="evidence" value="ECO:0007669"/>
    <property type="project" value="UniProtKB-KW"/>
</dbReference>
<dbReference type="GO" id="GO:0006048">
    <property type="term" value="P:UDP-N-acetylglucosamine biosynthetic process"/>
    <property type="evidence" value="ECO:0007669"/>
    <property type="project" value="UniProtKB-UniPathway"/>
</dbReference>
<dbReference type="CDD" id="cd02540">
    <property type="entry name" value="GT2_GlmU_N_bac"/>
    <property type="match status" value="1"/>
</dbReference>
<dbReference type="CDD" id="cd03353">
    <property type="entry name" value="LbH_GlmU_C"/>
    <property type="match status" value="1"/>
</dbReference>
<dbReference type="Gene3D" id="2.160.10.10">
    <property type="entry name" value="Hexapeptide repeat proteins"/>
    <property type="match status" value="1"/>
</dbReference>
<dbReference type="Gene3D" id="3.90.550.10">
    <property type="entry name" value="Spore Coat Polysaccharide Biosynthesis Protein SpsA, Chain A"/>
    <property type="match status" value="1"/>
</dbReference>
<dbReference type="HAMAP" id="MF_01631">
    <property type="entry name" value="GlmU"/>
    <property type="match status" value="1"/>
</dbReference>
<dbReference type="InterPro" id="IPR005882">
    <property type="entry name" value="Bifunctional_GlmU"/>
</dbReference>
<dbReference type="InterPro" id="IPR050065">
    <property type="entry name" value="GlmU-like"/>
</dbReference>
<dbReference type="InterPro" id="IPR038009">
    <property type="entry name" value="GlmU_C_LbH"/>
</dbReference>
<dbReference type="InterPro" id="IPR001451">
    <property type="entry name" value="Hexapep"/>
</dbReference>
<dbReference type="InterPro" id="IPR025877">
    <property type="entry name" value="MobA-like_NTP_Trfase"/>
</dbReference>
<dbReference type="InterPro" id="IPR029044">
    <property type="entry name" value="Nucleotide-diphossugar_trans"/>
</dbReference>
<dbReference type="InterPro" id="IPR011004">
    <property type="entry name" value="Trimer_LpxA-like_sf"/>
</dbReference>
<dbReference type="NCBIfam" id="TIGR01173">
    <property type="entry name" value="glmU"/>
    <property type="match status" value="1"/>
</dbReference>
<dbReference type="PANTHER" id="PTHR43584:SF3">
    <property type="entry name" value="BIFUNCTIONAL PROTEIN GLMU"/>
    <property type="match status" value="1"/>
</dbReference>
<dbReference type="PANTHER" id="PTHR43584">
    <property type="entry name" value="NUCLEOTIDYL TRANSFERASE"/>
    <property type="match status" value="1"/>
</dbReference>
<dbReference type="Pfam" id="PF00132">
    <property type="entry name" value="Hexapep"/>
    <property type="match status" value="2"/>
</dbReference>
<dbReference type="Pfam" id="PF12804">
    <property type="entry name" value="NTP_transf_3"/>
    <property type="match status" value="1"/>
</dbReference>
<dbReference type="SUPFAM" id="SSF53448">
    <property type="entry name" value="Nucleotide-diphospho-sugar transferases"/>
    <property type="match status" value="1"/>
</dbReference>
<dbReference type="SUPFAM" id="SSF51161">
    <property type="entry name" value="Trimeric LpxA-like enzymes"/>
    <property type="match status" value="1"/>
</dbReference>
<evidence type="ECO:0000255" key="1">
    <source>
        <dbReference type="HAMAP-Rule" id="MF_01631"/>
    </source>
</evidence>
<accession>A1V7Z3</accession>
<sequence length="453" mass="47580">MNIVILAAGTGKRMRSALPKVLHPLAGRPLLSHVIDTARALAPSRLVVVIGHGAEQVRAAVAAPDVQFAVQEQQLGTGHAVRQALPLLDPSQPTLVLYGDVPLTRTATLKRLADAATDARYGVLTVTLDDPTGYGRIVRDQAGCVTRIVEQKDASPDELRIDEINTGIVVAPTAQLSMWLGALGNDNAQGEYYLTDVVEQAIEAGFEIVTTQPDDEWETLGVNSKAQLAELERIHQRNLADALLAAGVTLADPARIDVRGTLACGRDVSIDVNCVFEGDVTLADGVTIGANCVIRHAAIAAGARVDAFSHLDGATVGANAVVGPYARLRPGAVLAADAHVGNFVEVKNATLGQGSKANHLTYLGDADIGARVNVGAGTITCNYDGANKFRTVIEDDVFVGSDTQFVAPVRVGRGVTVAAGTTVWKDVAADMLVLNDKTQTAKSGYVRPVKKKS</sequence>
<proteinExistence type="inferred from homology"/>
<feature type="chain" id="PRO_1000056143" description="Bifunctional protein GlmU">
    <location>
        <begin position="1"/>
        <end position="453"/>
    </location>
</feature>
<feature type="region of interest" description="Pyrophosphorylase" evidence="1">
    <location>
        <begin position="1"/>
        <end position="225"/>
    </location>
</feature>
<feature type="region of interest" description="Linker" evidence="1">
    <location>
        <begin position="226"/>
        <end position="246"/>
    </location>
</feature>
<feature type="region of interest" description="N-acetyltransferase" evidence="1">
    <location>
        <begin position="247"/>
        <end position="453"/>
    </location>
</feature>
<feature type="active site" description="Proton acceptor" evidence="1">
    <location>
        <position position="359"/>
    </location>
</feature>
<feature type="binding site" evidence="1">
    <location>
        <begin position="6"/>
        <end position="9"/>
    </location>
    <ligand>
        <name>UDP-N-acetyl-alpha-D-glucosamine</name>
        <dbReference type="ChEBI" id="CHEBI:57705"/>
    </ligand>
</feature>
<feature type="binding site" evidence="1">
    <location>
        <position position="20"/>
    </location>
    <ligand>
        <name>UDP-N-acetyl-alpha-D-glucosamine</name>
        <dbReference type="ChEBI" id="CHEBI:57705"/>
    </ligand>
</feature>
<feature type="binding site" evidence="1">
    <location>
        <position position="71"/>
    </location>
    <ligand>
        <name>UDP-N-acetyl-alpha-D-glucosamine</name>
        <dbReference type="ChEBI" id="CHEBI:57705"/>
    </ligand>
</feature>
<feature type="binding site" evidence="1">
    <location>
        <begin position="76"/>
        <end position="77"/>
    </location>
    <ligand>
        <name>UDP-N-acetyl-alpha-D-glucosamine</name>
        <dbReference type="ChEBI" id="CHEBI:57705"/>
    </ligand>
</feature>
<feature type="binding site" evidence="1">
    <location>
        <begin position="98"/>
        <end position="100"/>
    </location>
    <ligand>
        <name>UDP-N-acetyl-alpha-D-glucosamine</name>
        <dbReference type="ChEBI" id="CHEBI:57705"/>
    </ligand>
</feature>
<feature type="binding site" evidence="1">
    <location>
        <position position="100"/>
    </location>
    <ligand>
        <name>Mg(2+)</name>
        <dbReference type="ChEBI" id="CHEBI:18420"/>
    </ligand>
</feature>
<feature type="binding site" evidence="1">
    <location>
        <position position="135"/>
    </location>
    <ligand>
        <name>UDP-N-acetyl-alpha-D-glucosamine</name>
        <dbReference type="ChEBI" id="CHEBI:57705"/>
    </ligand>
</feature>
<feature type="binding site" evidence="1">
    <location>
        <position position="150"/>
    </location>
    <ligand>
        <name>UDP-N-acetyl-alpha-D-glucosamine</name>
        <dbReference type="ChEBI" id="CHEBI:57705"/>
    </ligand>
</feature>
<feature type="binding site" evidence="1">
    <location>
        <position position="165"/>
    </location>
    <ligand>
        <name>UDP-N-acetyl-alpha-D-glucosamine</name>
        <dbReference type="ChEBI" id="CHEBI:57705"/>
    </ligand>
</feature>
<feature type="binding site" evidence="1">
    <location>
        <position position="223"/>
    </location>
    <ligand>
        <name>Mg(2+)</name>
        <dbReference type="ChEBI" id="CHEBI:18420"/>
    </ligand>
</feature>
<feature type="binding site" evidence="1">
    <location>
        <position position="223"/>
    </location>
    <ligand>
        <name>UDP-N-acetyl-alpha-D-glucosamine</name>
        <dbReference type="ChEBI" id="CHEBI:57705"/>
    </ligand>
</feature>
<feature type="binding site" evidence="1">
    <location>
        <position position="329"/>
    </location>
    <ligand>
        <name>UDP-N-acetyl-alpha-D-glucosamine</name>
        <dbReference type="ChEBI" id="CHEBI:57705"/>
    </ligand>
</feature>
<feature type="binding site" evidence="1">
    <location>
        <position position="347"/>
    </location>
    <ligand>
        <name>UDP-N-acetyl-alpha-D-glucosamine</name>
        <dbReference type="ChEBI" id="CHEBI:57705"/>
    </ligand>
</feature>
<feature type="binding site" evidence="1">
    <location>
        <position position="362"/>
    </location>
    <ligand>
        <name>UDP-N-acetyl-alpha-D-glucosamine</name>
        <dbReference type="ChEBI" id="CHEBI:57705"/>
    </ligand>
</feature>
<feature type="binding site" evidence="1">
    <location>
        <position position="373"/>
    </location>
    <ligand>
        <name>UDP-N-acetyl-alpha-D-glucosamine</name>
        <dbReference type="ChEBI" id="CHEBI:57705"/>
    </ligand>
</feature>
<feature type="binding site" evidence="1">
    <location>
        <position position="376"/>
    </location>
    <ligand>
        <name>acetyl-CoA</name>
        <dbReference type="ChEBI" id="CHEBI:57288"/>
    </ligand>
</feature>
<feature type="binding site" evidence="1">
    <location>
        <begin position="382"/>
        <end position="383"/>
    </location>
    <ligand>
        <name>acetyl-CoA</name>
        <dbReference type="ChEBI" id="CHEBI:57288"/>
    </ligand>
</feature>
<feature type="binding site" evidence="1">
    <location>
        <position position="401"/>
    </location>
    <ligand>
        <name>acetyl-CoA</name>
        <dbReference type="ChEBI" id="CHEBI:57288"/>
    </ligand>
</feature>
<feature type="binding site" evidence="1">
    <location>
        <position position="419"/>
    </location>
    <ligand>
        <name>acetyl-CoA</name>
        <dbReference type="ChEBI" id="CHEBI:57288"/>
    </ligand>
</feature>